<evidence type="ECO:0000255" key="1"/>
<evidence type="ECO:0000255" key="2">
    <source>
        <dbReference type="PIRNR" id="PIRNR038193"/>
    </source>
</evidence>
<evidence type="ECO:0000255" key="3">
    <source>
        <dbReference type="PIRSR" id="PIRSR038193-1"/>
    </source>
</evidence>
<evidence type="ECO:0000255" key="4">
    <source>
        <dbReference type="PIRSR" id="PIRSR038193-3"/>
    </source>
</evidence>
<evidence type="ECO:0000255" key="5">
    <source>
        <dbReference type="PROSITE-ProRule" id="PRU00498"/>
    </source>
</evidence>
<evidence type="ECO:0000255" key="6">
    <source>
        <dbReference type="RuleBase" id="RU610713"/>
    </source>
</evidence>
<evidence type="ECO:0000269" key="7">
    <source>
    </source>
</evidence>
<evidence type="ECO:0000303" key="8">
    <source>
    </source>
</evidence>
<evidence type="ECO:0000303" key="9">
    <source>
    </source>
</evidence>
<evidence type="ECO:0000305" key="10"/>
<evidence type="ECO:0000312" key="11">
    <source>
        <dbReference type="EMBL" id="AAD32195.1"/>
    </source>
</evidence>
<reference evidence="11" key="1">
    <citation type="journal article" date="1999" name="Proc. Natl. Acad. Sci. U.S.A.">
        <title>Toward an understanding of the biochemical and pharmacological complexity of the saliva of a hematophagous sand fly Lutzomyia longipalpis.</title>
        <authorList>
            <person name="Charlab R."/>
            <person name="Valenzuela J.G."/>
            <person name="Rowton E.D."/>
            <person name="Ribeiro J.M."/>
        </authorList>
    </citation>
    <scope>NUCLEOTIDE SEQUENCE [LARGE SCALE MRNA]</scope>
    <source>
        <strain evidence="11">Jacobina</strain>
        <tissue evidence="11">Salivary gland</tissue>
    </source>
</reference>
<reference key="2">
    <citation type="journal article" date="2018" name="PLoS Pathog.">
        <title>Immunity to LuloHya and Lundep, the salivary spreading factors from Lutzomyia longipalpis, protects against Leishmania major infection.</title>
        <authorList>
            <person name="Martin-Martin I."/>
            <person name="Chagas A.C."/>
            <person name="Guimaraes-Costa A.B."/>
            <person name="Amo L."/>
            <person name="Oliveira F."/>
            <person name="Moore I.N."/>
            <person name="DeSouza-Vieira T.S."/>
            <person name="Sanchez E.E."/>
            <person name="Suntravat M."/>
            <person name="Valenzuela J.G."/>
            <person name="Ribeiro J.M.C."/>
            <person name="Calvo E."/>
        </authorList>
    </citation>
    <scope>FUNCTION</scope>
    <scope>FUNCTION (MICROBIAL INFECTION)</scope>
    <scope>CATALYTIC ACTIVITY</scope>
    <scope>BIOPHYSICOCHEMICAL PROPERTIES</scope>
    <scope>TISSUE SPECIFICITY</scope>
    <scope>GLYCOSYLATION</scope>
</reference>
<accession>Q9XZ48</accession>
<sequence length="376" mass="44233">MNWIFHLFCAVYGIFCEENSFTIYWNVPTHQCEKLNVSFISLLKELNIVHNKDGNFSGESFTILYSPGLWPSMEHKNITNGGMPQCGNMTLHLEKLEKDVKEKLKDDGYSGLAVIDMESWRPVFRQNTGWMIKYRELTFEQYNKTLAEEYKNNTTNDKLRNRLIKESAEIFEAPAKDFLMNSTELVKKYWKDAKWGYYGFPYCFNMGVAANARNESCPKIVKEENNKTEWLFKSYDYWFPSVYITKVNFTCEERGQLVRGRVTEYQRLRKEFNPKAKIYPYVWFLYNLSNEYLSKEDLEMSLKILKMGKMDGAVIWGSSKNLTKECECKDLYDYVNGTMRTVLEGLKKPENNVKWNGSCQETSDAARYLKNCTDKQ</sequence>
<protein>
    <recommendedName>
        <fullName evidence="10">Salivary hyaluronidase</fullName>
        <shortName evidence="8">LuloHYAL</shortName>
        <shortName evidence="9">LuloHya</shortName>
        <ecNumber evidence="7">3.2.1.35</ecNumber>
    </recommendedName>
</protein>
<name>HUGA_LUTLO</name>
<feature type="signal peptide" evidence="1">
    <location>
        <begin position="1"/>
        <end position="16"/>
    </location>
</feature>
<feature type="chain" id="PRO_5004336867" description="Salivary hyaluronidase" evidence="1">
    <location>
        <begin position="17"/>
        <end position="376"/>
    </location>
</feature>
<feature type="active site" description="Proton donor" evidence="3">
    <location>
        <position position="118"/>
    </location>
</feature>
<feature type="glycosylation site" description="N-linked (GlcNAc...) asparagine" evidence="5">
    <location>
        <position position="36"/>
    </location>
</feature>
<feature type="glycosylation site" description="N-linked (GlcNAc...) asparagine" evidence="5">
    <location>
        <position position="55"/>
    </location>
</feature>
<feature type="glycosylation site" description="N-linked (GlcNAc...) asparagine" evidence="5">
    <location>
        <position position="77"/>
    </location>
</feature>
<feature type="glycosylation site" description="N-linked (GlcNAc...) asparagine" evidence="5">
    <location>
        <position position="88"/>
    </location>
</feature>
<feature type="glycosylation site" description="N-linked (GlcNAc...) asparagine" evidence="5">
    <location>
        <position position="143"/>
    </location>
</feature>
<feature type="glycosylation site" description="N-linked (GlcNAc...) asparagine" evidence="5">
    <location>
        <position position="153"/>
    </location>
</feature>
<feature type="glycosylation site" description="N-linked (GlcNAc...) asparagine" evidence="5">
    <location>
        <position position="181"/>
    </location>
</feature>
<feature type="glycosylation site" description="N-linked (GlcNAc...) asparagine" evidence="5">
    <location>
        <position position="214"/>
    </location>
</feature>
<feature type="glycosylation site" description="N-linked (GlcNAc...) asparagine" evidence="5">
    <location>
        <position position="226"/>
    </location>
</feature>
<feature type="glycosylation site" description="N-linked (GlcNAc...) asparagine" evidence="5">
    <location>
        <position position="248"/>
    </location>
</feature>
<feature type="glycosylation site" description="N-linked (GlcNAc...) asparagine" evidence="5">
    <location>
        <position position="287"/>
    </location>
</feature>
<feature type="glycosylation site" description="N-linked (GlcNAc...) asparagine" evidence="5">
    <location>
        <position position="321"/>
    </location>
</feature>
<feature type="glycosylation site" description="N-linked (GlcNAc...) asparagine" evidence="5">
    <location>
        <position position="336"/>
    </location>
</feature>
<feature type="glycosylation site" description="N-linked (GlcNAc...) asparagine" evidence="5">
    <location>
        <position position="356"/>
    </location>
</feature>
<feature type="glycosylation site" description="N-linked (GlcNAc...) asparagine" evidence="5">
    <location>
        <position position="371"/>
    </location>
</feature>
<feature type="disulfide bond" evidence="4">
    <location>
        <begin position="32"/>
        <end position="328"/>
    </location>
</feature>
<feature type="disulfide bond" evidence="4">
    <location>
        <begin position="203"/>
        <end position="217"/>
    </location>
</feature>
<proteinExistence type="evidence at protein level"/>
<gene>
    <name evidence="11" type="primary">HYAL</name>
</gene>
<comment type="function">
    <text evidence="7">Hydrolyzes high molecular weight hyaluronic acid to produce small oligosaccharides (PubMed:29723281). Up-regulates expression of CSF2, CSF3, LIF, CXCL1, CXCL2 and CXCL8 in cultured human dermal microvascular endothelial cells (PubMed:29723281). Promotes host neutrophil recruitment at the injection site (PubMed:29723281).</text>
</comment>
<comment type="function">
    <text evidence="7">(Microbial infection) Probably promotes Leishmania major infection in the host.</text>
</comment>
<comment type="catalytic activity">
    <reaction evidence="7">
        <text>Random hydrolysis of (1-&gt;4)-linkages between N-acetyl-beta-D-glucosamine and D-glucuronate residues in hyaluronate.</text>
        <dbReference type="EC" id="3.2.1.35"/>
    </reaction>
</comment>
<comment type="biophysicochemical properties">
    <phDependence>
        <text evidence="7">Optimum pH is 6.0.</text>
    </phDependence>
</comment>
<comment type="subcellular location">
    <subcellularLocation>
        <location evidence="10">Secreted</location>
    </subcellularLocation>
</comment>
<comment type="tissue specificity">
    <text evidence="7">Female salivary gland (at protein level).</text>
</comment>
<comment type="PTM">
    <text evidence="7">Glycosylated; glycosylation is critical for enzymatic activity.</text>
</comment>
<comment type="miscellaneous">
    <text evidence="7">Enhances dermonecrotic lesions caused by venom serine protease from Crotalus oreganus helleri (hemorrhagic factor) (PubMed:29723281). Immunization against the protein protects mice against L.major infection; protective immunity is abrogated in B-cell-deficient mice indicating that antibodies against the proteins play a significant role for disease protection (PubMed:29723281).</text>
</comment>
<comment type="similarity">
    <text evidence="2 6">Belongs to the glycosyl hydrolase 56 family.</text>
</comment>
<organism evidence="11">
    <name type="scientific">Lutzomyia longipalpis</name>
    <name type="common">Sand fly</name>
    <dbReference type="NCBI Taxonomy" id="7200"/>
    <lineage>
        <taxon>Eukaryota</taxon>
        <taxon>Metazoa</taxon>
        <taxon>Ecdysozoa</taxon>
        <taxon>Arthropoda</taxon>
        <taxon>Hexapoda</taxon>
        <taxon>Insecta</taxon>
        <taxon>Pterygota</taxon>
        <taxon>Neoptera</taxon>
        <taxon>Endopterygota</taxon>
        <taxon>Diptera</taxon>
        <taxon>Nematocera</taxon>
        <taxon>Psychodoidea</taxon>
        <taxon>Psychodidae</taxon>
        <taxon>Lutzomyia</taxon>
        <taxon>Lutzomyia</taxon>
    </lineage>
</organism>
<dbReference type="EC" id="3.2.1.35" evidence="7"/>
<dbReference type="EMBL" id="AF132515">
    <property type="protein sequence ID" value="AAD32195.1"/>
    <property type="molecule type" value="mRNA"/>
</dbReference>
<dbReference type="SMR" id="Q9XZ48"/>
<dbReference type="CAZy" id="GH56">
    <property type="family name" value="Glycoside Hydrolase Family 56"/>
</dbReference>
<dbReference type="VEuPathDB" id="VectorBase:LLONM1_008797"/>
<dbReference type="Proteomes" id="UP000092461">
    <property type="component" value="Unplaced"/>
</dbReference>
<dbReference type="GO" id="GO:0005576">
    <property type="term" value="C:extracellular region"/>
    <property type="evidence" value="ECO:0007669"/>
    <property type="project" value="UniProtKB-SubCell"/>
</dbReference>
<dbReference type="GO" id="GO:0004415">
    <property type="term" value="F:hyalurononglucosaminidase activity"/>
    <property type="evidence" value="ECO:0007669"/>
    <property type="project" value="UniProtKB-EC"/>
</dbReference>
<dbReference type="GO" id="GO:0005975">
    <property type="term" value="P:carbohydrate metabolic process"/>
    <property type="evidence" value="ECO:0007669"/>
    <property type="project" value="InterPro"/>
</dbReference>
<dbReference type="GO" id="GO:0030214">
    <property type="term" value="P:hyaluronan catabolic process"/>
    <property type="evidence" value="ECO:0007669"/>
    <property type="project" value="TreeGrafter"/>
</dbReference>
<dbReference type="Gene3D" id="3.20.20.70">
    <property type="entry name" value="Aldolase class I"/>
    <property type="match status" value="1"/>
</dbReference>
<dbReference type="InterPro" id="IPR013785">
    <property type="entry name" value="Aldolase_TIM"/>
</dbReference>
<dbReference type="InterPro" id="IPR017853">
    <property type="entry name" value="Glycoside_hydrolase_SF"/>
</dbReference>
<dbReference type="InterPro" id="IPR018155">
    <property type="entry name" value="Hyaluronidase"/>
</dbReference>
<dbReference type="PANTHER" id="PTHR11769">
    <property type="entry name" value="HYALURONIDASE"/>
    <property type="match status" value="1"/>
</dbReference>
<dbReference type="PANTHER" id="PTHR11769:SF35">
    <property type="entry name" value="HYALURONIDASE"/>
    <property type="match status" value="1"/>
</dbReference>
<dbReference type="Pfam" id="PF01630">
    <property type="entry name" value="Glyco_hydro_56"/>
    <property type="match status" value="1"/>
</dbReference>
<dbReference type="PIRSF" id="PIRSF038193">
    <property type="entry name" value="Hyaluronidase"/>
    <property type="match status" value="1"/>
</dbReference>
<dbReference type="PRINTS" id="PR00846">
    <property type="entry name" value="GLHYDRLASE56"/>
</dbReference>
<dbReference type="SUPFAM" id="SSF51445">
    <property type="entry name" value="(Trans)glycosidases"/>
    <property type="match status" value="1"/>
</dbReference>
<keyword id="KW-1015">Disulfide bond</keyword>
<keyword id="KW-0325">Glycoprotein</keyword>
<keyword id="KW-0326">Glycosidase</keyword>
<keyword id="KW-0378">Hydrolase</keyword>
<keyword id="KW-0964">Secreted</keyword>
<keyword id="KW-0732">Signal</keyword>